<dbReference type="EC" id="2.1.1.45" evidence="1"/>
<dbReference type="EMBL" id="BA000012">
    <property type="protein sequence ID" value="BAB48835.1"/>
    <property type="molecule type" value="Genomic_DNA"/>
</dbReference>
<dbReference type="RefSeq" id="WP_010910188.1">
    <property type="nucleotide sequence ID" value="NC_002678.2"/>
</dbReference>
<dbReference type="SMR" id="Q98KH9"/>
<dbReference type="KEGG" id="mlo:mll1467"/>
<dbReference type="PATRIC" id="fig|266835.9.peg.1185"/>
<dbReference type="eggNOG" id="COG0207">
    <property type="taxonomic scope" value="Bacteria"/>
</dbReference>
<dbReference type="HOGENOM" id="CLU_021669_0_0_5"/>
<dbReference type="UniPathway" id="UPA00575"/>
<dbReference type="Proteomes" id="UP000000552">
    <property type="component" value="Chromosome"/>
</dbReference>
<dbReference type="GO" id="GO:0005829">
    <property type="term" value="C:cytosol"/>
    <property type="evidence" value="ECO:0007669"/>
    <property type="project" value="TreeGrafter"/>
</dbReference>
<dbReference type="GO" id="GO:0004799">
    <property type="term" value="F:thymidylate synthase activity"/>
    <property type="evidence" value="ECO:0007669"/>
    <property type="project" value="UniProtKB-UniRule"/>
</dbReference>
<dbReference type="GO" id="GO:0006231">
    <property type="term" value="P:dTMP biosynthetic process"/>
    <property type="evidence" value="ECO:0007669"/>
    <property type="project" value="UniProtKB-UniRule"/>
</dbReference>
<dbReference type="GO" id="GO:0006235">
    <property type="term" value="P:dTTP biosynthetic process"/>
    <property type="evidence" value="ECO:0007669"/>
    <property type="project" value="UniProtKB-UniRule"/>
</dbReference>
<dbReference type="GO" id="GO:0032259">
    <property type="term" value="P:methylation"/>
    <property type="evidence" value="ECO:0007669"/>
    <property type="project" value="UniProtKB-KW"/>
</dbReference>
<dbReference type="CDD" id="cd00351">
    <property type="entry name" value="TS_Pyrimidine_HMase"/>
    <property type="match status" value="1"/>
</dbReference>
<dbReference type="FunFam" id="3.30.572.10:FF:000013">
    <property type="entry name" value="Thymidylate synthase"/>
    <property type="match status" value="1"/>
</dbReference>
<dbReference type="Gene3D" id="3.30.572.10">
    <property type="entry name" value="Thymidylate synthase/dCMP hydroxymethylase domain"/>
    <property type="match status" value="1"/>
</dbReference>
<dbReference type="HAMAP" id="MF_00008">
    <property type="entry name" value="Thymidy_synth_bact"/>
    <property type="match status" value="1"/>
</dbReference>
<dbReference type="InterPro" id="IPR045097">
    <property type="entry name" value="Thymidate_synth/dCMP_Mease"/>
</dbReference>
<dbReference type="InterPro" id="IPR023451">
    <property type="entry name" value="Thymidate_synth/dCMP_Mease_dom"/>
</dbReference>
<dbReference type="InterPro" id="IPR036926">
    <property type="entry name" value="Thymidate_synth/dCMP_Mease_sf"/>
</dbReference>
<dbReference type="InterPro" id="IPR000398">
    <property type="entry name" value="Thymidylate_synthase"/>
</dbReference>
<dbReference type="InterPro" id="IPR020940">
    <property type="entry name" value="Thymidylate_synthase_AS"/>
</dbReference>
<dbReference type="NCBIfam" id="NF002497">
    <property type="entry name" value="PRK01827.1-3"/>
    <property type="match status" value="1"/>
</dbReference>
<dbReference type="NCBIfam" id="NF002499">
    <property type="entry name" value="PRK01827.1-5"/>
    <property type="match status" value="1"/>
</dbReference>
<dbReference type="NCBIfam" id="TIGR03284">
    <property type="entry name" value="thym_sym"/>
    <property type="match status" value="2"/>
</dbReference>
<dbReference type="PANTHER" id="PTHR11548:SF9">
    <property type="entry name" value="THYMIDYLATE SYNTHASE"/>
    <property type="match status" value="1"/>
</dbReference>
<dbReference type="PANTHER" id="PTHR11548">
    <property type="entry name" value="THYMIDYLATE SYNTHASE 1"/>
    <property type="match status" value="1"/>
</dbReference>
<dbReference type="Pfam" id="PF00303">
    <property type="entry name" value="Thymidylat_synt"/>
    <property type="match status" value="1"/>
</dbReference>
<dbReference type="PRINTS" id="PR00108">
    <property type="entry name" value="THYMDSNTHASE"/>
</dbReference>
<dbReference type="SUPFAM" id="SSF55831">
    <property type="entry name" value="Thymidylate synthase/dCMP hydroxymethylase"/>
    <property type="match status" value="1"/>
</dbReference>
<dbReference type="PROSITE" id="PS00091">
    <property type="entry name" value="THYMIDYLATE_SYNTHASE"/>
    <property type="match status" value="1"/>
</dbReference>
<evidence type="ECO:0000255" key="1">
    <source>
        <dbReference type="HAMAP-Rule" id="MF_00008"/>
    </source>
</evidence>
<keyword id="KW-0963">Cytoplasm</keyword>
<keyword id="KW-0489">Methyltransferase</keyword>
<keyword id="KW-0545">Nucleotide biosynthesis</keyword>
<keyword id="KW-0808">Transferase</keyword>
<gene>
    <name evidence="1" type="primary">thyA</name>
    <name type="ordered locus">mll1467</name>
</gene>
<accession>Q98KH9</accession>
<sequence length="264" mass="30096">MRQYLDLLQHVLDNGADRSDRTGTGTRSVFGYQMRFDLARGFPVTTTKKLHLKSIIHELLWFLAGDTNIKYLTDHGVTIWDEWADENGDLGPVYGRQWRSWPDGHGGSIDQIAGLLKEIRRNPQSRRLIVSAWNPAEVEAMALPPCHCLFQFYVSEGRLSCQLYQRSADIFLGVPFNIASYALLTLMVAQVTGLKPGDFVHTLGDAHLYSNHFEQAREQLQRTPRALPTMWINPEVKDLFAFRFEDFRLENYVADASIQAPIAV</sequence>
<comment type="function">
    <text evidence="1">Catalyzes the reductive methylation of 2'-deoxyuridine-5'-monophosphate (dUMP) to 2'-deoxythymidine-5'-monophosphate (dTMP) while utilizing 5,10-methylenetetrahydrofolate (mTHF) as the methyl donor and reductant in the reaction, yielding dihydrofolate (DHF) as a by-product. This enzymatic reaction provides an intracellular de novo source of dTMP, an essential precursor for DNA biosynthesis.</text>
</comment>
<comment type="catalytic activity">
    <reaction evidence="1">
        <text>dUMP + (6R)-5,10-methylene-5,6,7,8-tetrahydrofolate = 7,8-dihydrofolate + dTMP</text>
        <dbReference type="Rhea" id="RHEA:12104"/>
        <dbReference type="ChEBI" id="CHEBI:15636"/>
        <dbReference type="ChEBI" id="CHEBI:57451"/>
        <dbReference type="ChEBI" id="CHEBI:63528"/>
        <dbReference type="ChEBI" id="CHEBI:246422"/>
        <dbReference type="EC" id="2.1.1.45"/>
    </reaction>
</comment>
<comment type="pathway">
    <text evidence="1">Pyrimidine metabolism; dTTP biosynthesis.</text>
</comment>
<comment type="subunit">
    <text evidence="1">Homodimer.</text>
</comment>
<comment type="subcellular location">
    <subcellularLocation>
        <location evidence="1">Cytoplasm</location>
    </subcellularLocation>
</comment>
<comment type="similarity">
    <text evidence="1">Belongs to the thymidylate synthase family. Bacterial-type ThyA subfamily.</text>
</comment>
<name>TYSY_RHILO</name>
<proteinExistence type="inferred from homology"/>
<protein>
    <recommendedName>
        <fullName evidence="1">Thymidylate synthase</fullName>
        <shortName evidence="1">TS</shortName>
        <shortName evidence="1">TSase</shortName>
        <ecNumber evidence="1">2.1.1.45</ecNumber>
    </recommendedName>
</protein>
<organism>
    <name type="scientific">Mesorhizobium japonicum (strain LMG 29417 / CECT 9101 / MAFF 303099)</name>
    <name type="common">Mesorhizobium loti (strain MAFF 303099)</name>
    <dbReference type="NCBI Taxonomy" id="266835"/>
    <lineage>
        <taxon>Bacteria</taxon>
        <taxon>Pseudomonadati</taxon>
        <taxon>Pseudomonadota</taxon>
        <taxon>Alphaproteobacteria</taxon>
        <taxon>Hyphomicrobiales</taxon>
        <taxon>Phyllobacteriaceae</taxon>
        <taxon>Mesorhizobium</taxon>
    </lineage>
</organism>
<reference key="1">
    <citation type="journal article" date="2000" name="DNA Res.">
        <title>Complete genome structure of the nitrogen-fixing symbiotic bacterium Mesorhizobium loti.</title>
        <authorList>
            <person name="Kaneko T."/>
            <person name="Nakamura Y."/>
            <person name="Sato S."/>
            <person name="Asamizu E."/>
            <person name="Kato T."/>
            <person name="Sasamoto S."/>
            <person name="Watanabe A."/>
            <person name="Idesawa K."/>
            <person name="Ishikawa A."/>
            <person name="Kawashima K."/>
            <person name="Kimura T."/>
            <person name="Kishida Y."/>
            <person name="Kiyokawa C."/>
            <person name="Kohara M."/>
            <person name="Matsumoto M."/>
            <person name="Matsuno A."/>
            <person name="Mochizuki Y."/>
            <person name="Nakayama S."/>
            <person name="Nakazaki N."/>
            <person name="Shimpo S."/>
            <person name="Sugimoto M."/>
            <person name="Takeuchi C."/>
            <person name="Yamada M."/>
            <person name="Tabata S."/>
        </authorList>
    </citation>
    <scope>NUCLEOTIDE SEQUENCE [LARGE SCALE GENOMIC DNA]</scope>
    <source>
        <strain>LMG 29417 / CECT 9101 / MAFF 303099</strain>
    </source>
</reference>
<feature type="chain" id="PRO_0000141008" description="Thymidylate synthase">
    <location>
        <begin position="1"/>
        <end position="264"/>
    </location>
</feature>
<feature type="active site" description="Nucleophile" evidence="1">
    <location>
        <position position="146"/>
    </location>
</feature>
<feature type="binding site" description="in other chain" evidence="1">
    <location>
        <position position="21"/>
    </location>
    <ligand>
        <name>dUMP</name>
        <dbReference type="ChEBI" id="CHEBI:246422"/>
        <note>ligand shared between dimeric partners</note>
    </ligand>
</feature>
<feature type="binding site" evidence="1">
    <location>
        <position position="51"/>
    </location>
    <ligand>
        <name>(6R)-5,10-methylene-5,6,7,8-tetrahydrofolate</name>
        <dbReference type="ChEBI" id="CHEBI:15636"/>
    </ligand>
</feature>
<feature type="binding site" evidence="1">
    <location>
        <begin position="126"/>
        <end position="127"/>
    </location>
    <ligand>
        <name>dUMP</name>
        <dbReference type="ChEBI" id="CHEBI:246422"/>
        <note>ligand shared between dimeric partners</note>
    </ligand>
</feature>
<feature type="binding site" description="in other chain" evidence="1">
    <location>
        <begin position="166"/>
        <end position="169"/>
    </location>
    <ligand>
        <name>dUMP</name>
        <dbReference type="ChEBI" id="CHEBI:246422"/>
        <note>ligand shared between dimeric partners</note>
    </ligand>
</feature>
<feature type="binding site" evidence="1">
    <location>
        <position position="169"/>
    </location>
    <ligand>
        <name>(6R)-5,10-methylene-5,6,7,8-tetrahydrofolate</name>
        <dbReference type="ChEBI" id="CHEBI:15636"/>
    </ligand>
</feature>
<feature type="binding site" description="in other chain" evidence="1">
    <location>
        <position position="177"/>
    </location>
    <ligand>
        <name>dUMP</name>
        <dbReference type="ChEBI" id="CHEBI:246422"/>
        <note>ligand shared between dimeric partners</note>
    </ligand>
</feature>
<feature type="binding site" description="in other chain" evidence="1">
    <location>
        <begin position="207"/>
        <end position="209"/>
    </location>
    <ligand>
        <name>dUMP</name>
        <dbReference type="ChEBI" id="CHEBI:246422"/>
        <note>ligand shared between dimeric partners</note>
    </ligand>
</feature>
<feature type="binding site" evidence="1">
    <location>
        <position position="263"/>
    </location>
    <ligand>
        <name>(6R)-5,10-methylene-5,6,7,8-tetrahydrofolate</name>
        <dbReference type="ChEBI" id="CHEBI:15636"/>
    </ligand>
</feature>